<accession>A0ZZ62</accession>
<organism>
    <name type="scientific">Gossypium barbadense</name>
    <name type="common">Sea Island cotton</name>
    <name type="synonym">Hibiscus barbadensis</name>
    <dbReference type="NCBI Taxonomy" id="3634"/>
    <lineage>
        <taxon>Eukaryota</taxon>
        <taxon>Viridiplantae</taxon>
        <taxon>Streptophyta</taxon>
        <taxon>Embryophyta</taxon>
        <taxon>Tracheophyta</taxon>
        <taxon>Spermatophyta</taxon>
        <taxon>Magnoliopsida</taxon>
        <taxon>eudicotyledons</taxon>
        <taxon>Gunneridae</taxon>
        <taxon>Pentapetalae</taxon>
        <taxon>rosids</taxon>
        <taxon>malvids</taxon>
        <taxon>Malvales</taxon>
        <taxon>Malvaceae</taxon>
        <taxon>Malvoideae</taxon>
        <taxon>Gossypium</taxon>
    </lineage>
</organism>
<feature type="chain" id="PRO_0000276296" description="Photosystem II reaction center protein T">
    <location>
        <begin position="1"/>
        <end position="35"/>
    </location>
</feature>
<feature type="transmembrane region" description="Helical" evidence="1">
    <location>
        <begin position="3"/>
        <end position="23"/>
    </location>
</feature>
<dbReference type="EMBL" id="AP009123">
    <property type="protein sequence ID" value="BAF41274.1"/>
    <property type="molecule type" value="Genomic_DNA"/>
</dbReference>
<dbReference type="RefSeq" id="YP_913214.1">
    <property type="nucleotide sequence ID" value="NC_008641.1"/>
</dbReference>
<dbReference type="SMR" id="A0ZZ62"/>
<dbReference type="GeneID" id="4575229"/>
<dbReference type="GO" id="GO:0009535">
    <property type="term" value="C:chloroplast thylakoid membrane"/>
    <property type="evidence" value="ECO:0007669"/>
    <property type="project" value="UniProtKB-SubCell"/>
</dbReference>
<dbReference type="GO" id="GO:0009539">
    <property type="term" value="C:photosystem II reaction center"/>
    <property type="evidence" value="ECO:0007669"/>
    <property type="project" value="InterPro"/>
</dbReference>
<dbReference type="GO" id="GO:0015979">
    <property type="term" value="P:photosynthesis"/>
    <property type="evidence" value="ECO:0007669"/>
    <property type="project" value="UniProtKB-UniRule"/>
</dbReference>
<dbReference type="HAMAP" id="MF_00808">
    <property type="entry name" value="PSII_PsbT"/>
    <property type="match status" value="1"/>
</dbReference>
<dbReference type="InterPro" id="IPR001743">
    <property type="entry name" value="PSII_PsbT"/>
</dbReference>
<dbReference type="InterPro" id="IPR037268">
    <property type="entry name" value="PSII_PsbT_sf"/>
</dbReference>
<dbReference type="PANTHER" id="PTHR36411">
    <property type="match status" value="1"/>
</dbReference>
<dbReference type="PANTHER" id="PTHR36411:SF2">
    <property type="entry name" value="PHOTOSYSTEM II REACTION CENTER PROTEIN T"/>
    <property type="match status" value="1"/>
</dbReference>
<dbReference type="Pfam" id="PF01405">
    <property type="entry name" value="PsbT"/>
    <property type="match status" value="1"/>
</dbReference>
<dbReference type="SUPFAM" id="SSF161029">
    <property type="entry name" value="Photosystem II reaction center protein T, PsbT"/>
    <property type="match status" value="1"/>
</dbReference>
<reference key="1">
    <citation type="journal article" date="2006" name="Genes Genet. Syst.">
        <title>Complete nucleotide sequence of the cotton (Gossypium barbadense L.) chloroplast genome with a comparative analysis of sequences among 9 dicot plants.</title>
        <authorList>
            <person name="Ibrahim R.I.H."/>
            <person name="Azuma J."/>
            <person name="Sakamoto M."/>
        </authorList>
    </citation>
    <scope>NUCLEOTIDE SEQUENCE [LARGE SCALE GENOMIC DNA]</scope>
</reference>
<sequence>MEALVYTFLLVSTLGIIFFAIFFREPPKILTKKMK</sequence>
<evidence type="ECO:0000255" key="1">
    <source>
        <dbReference type="HAMAP-Rule" id="MF_00808"/>
    </source>
</evidence>
<proteinExistence type="inferred from homology"/>
<keyword id="KW-0150">Chloroplast</keyword>
<keyword id="KW-0472">Membrane</keyword>
<keyword id="KW-0602">Photosynthesis</keyword>
<keyword id="KW-0604">Photosystem II</keyword>
<keyword id="KW-0934">Plastid</keyword>
<keyword id="KW-0793">Thylakoid</keyword>
<keyword id="KW-0812">Transmembrane</keyword>
<keyword id="KW-1133">Transmembrane helix</keyword>
<comment type="function">
    <text evidence="1">Found at the monomer-monomer interface of the photosystem II (PS II) dimer, plays a role in assembly and dimerization of PSII. PSII is a light-driven water plastoquinone oxidoreductase, using light energy to abstract electrons from H(2)O, generating a proton gradient subsequently used for ATP formation.</text>
</comment>
<comment type="subunit">
    <text evidence="1">PSII is composed of 1 copy each of membrane proteins PsbA, PsbB, PsbC, PsbD, PsbE, PsbF, PsbH, PsbI, PsbJ, PsbK, PsbL, PsbM, PsbT, PsbY, PsbZ, Psb30/Ycf12, at least 3 peripheral proteins of the oxygen-evolving complex and a large number of cofactors. It forms dimeric complexes.</text>
</comment>
<comment type="subcellular location">
    <subcellularLocation>
        <location evidence="1">Plastid</location>
        <location evidence="1">Chloroplast thylakoid membrane</location>
        <topology evidence="1">Single-pass membrane protein</topology>
    </subcellularLocation>
</comment>
<comment type="similarity">
    <text evidence="1">Belongs to the PsbT family.</text>
</comment>
<protein>
    <recommendedName>
        <fullName evidence="1">Photosystem II reaction center protein T</fullName>
        <shortName evidence="1">PSII-T</shortName>
    </recommendedName>
</protein>
<name>PSBT_GOSBA</name>
<gene>
    <name evidence="1" type="primary">psbT</name>
</gene>
<geneLocation type="chloroplast"/>